<gene>
    <name evidence="7" type="primary">psbK</name>
</gene>
<proteinExistence type="evidence at protein level"/>
<sequence length="37" mass="4047">KLPEAYAIFDPLVDVLPVIPVLFFALAFVVQAAVGFR</sequence>
<keyword id="KW-0002">3D-structure</keyword>
<keyword id="KW-0903">Direct protein sequencing</keyword>
<keyword id="KW-0472">Membrane</keyword>
<keyword id="KW-0602">Photosynthesis</keyword>
<keyword id="KW-0604">Photosystem II</keyword>
<keyword id="KW-0674">Reaction center</keyword>
<keyword id="KW-0793">Thylakoid</keyword>
<keyword id="KW-0812">Transmembrane</keyword>
<keyword id="KW-1133">Transmembrane helix</keyword>
<reference key="1">
    <citation type="journal article" date="1989" name="FEBS Lett.">
        <title>Low-molecular-mass proteins in cyanobacterial photosystem II: identification of psbH and psbK gene products by N-terminal sequencing.</title>
        <authorList>
            <person name="Koike H."/>
            <person name="Mamada K."/>
            <person name="Ikeuchi M."/>
            <person name="Inoue Y."/>
        </authorList>
    </citation>
    <scope>PROTEIN SEQUENCE OF 1-31</scope>
    <scope>SUBUNIT</scope>
    <scope>SUBCELLULAR LOCATION</scope>
</reference>
<reference key="2">
    <citation type="journal article" date="2002" name="Plant Cell Physiol.">
        <title>Low-molecular-mass polypeptide components of a photosystem II preparation from the thermophilic cyanobacterium Thermosynechococcus vulcanus.</title>
        <authorList>
            <person name="Kashino Y."/>
            <person name="Koike H."/>
            <person name="Yoshio M."/>
            <person name="Egashira H."/>
            <person name="Ikeuchi M."/>
            <person name="Pakrasi H.B."/>
            <person name="Satoh K."/>
        </authorList>
    </citation>
    <scope>PROTEIN SEQUENCE OF 1-9</scope>
    <scope>COMPOSITION OF PHOTOSYSTEM II</scope>
    <scope>SUBUNIT</scope>
</reference>
<reference key="3">
    <citation type="journal article" date="2003" name="Proc. Natl. Acad. Sci. U.S.A.">
        <title>Crystal structure of oxygen-evolving photosystem II from Thermosynechococcus vulcanus at 3.7-A resolution.</title>
        <authorList>
            <person name="Kamiya N."/>
            <person name="Shen J.-R."/>
        </authorList>
    </citation>
    <scope>X-RAY CRYSTALLOGRAPHY (3.7 ANGSTROMS) OF 1-36 IN PHOTOSYSTEM II</scope>
    <scope>COFACTOR</scope>
    <scope>SUBUNIT</scope>
    <scope>SUBCELLULAR LOCATION</scope>
</reference>
<reference key="4">
    <citation type="journal article" date="2009" name="Proc. Natl. Acad. Sci. U.S.A.">
        <title>Location of chloride and its possible functions in oxygen-evolving photosystem II revealed by X-ray crystallography.</title>
        <authorList>
            <person name="Kawakami K."/>
            <person name="Umena Y."/>
            <person name="Kamiya N."/>
            <person name="Shen J.R."/>
        </authorList>
    </citation>
    <scope>X-RAY CRYSTALLOGRAPHY (3.7 ANGSTROMS) OF 1-36 IN PHOTOSYSTEM II</scope>
    <scope>FUNCTION</scope>
    <scope>COFACTOR</scope>
    <scope>SUBUNIT</scope>
    <scope>SUBCELLULAR LOCATION</scope>
</reference>
<reference key="5">
    <citation type="journal article" date="2011" name="Nature">
        <title>Crystal structure of oxygen-evolving photosystem II at a resolution of 1.9 A.</title>
        <authorList>
            <person name="Umena Y."/>
            <person name="Kawakami K."/>
            <person name="Shen J.R."/>
            <person name="Kamiya N."/>
        </authorList>
    </citation>
    <scope>X-RAY CRYSTALLOGRAPHY (1.90 ANGSTROMS) IN PHOTOSYSTEM II</scope>
    <scope>COFACTOR</scope>
    <scope>SUBUNIT</scope>
    <scope>SUBCELLULAR LOCATION</scope>
    <scope>TOPOLOGY</scope>
</reference>
<reference key="6">
    <citation type="journal article" date="2013" name="Proc. Natl. Acad. Sci. U.S.A.">
        <title>Structure of Sr-substituted photosystem II at 2.1 A resolution and its implications in the mechanism of water oxidation.</title>
        <authorList>
            <person name="Koua F.H."/>
            <person name="Umena Y."/>
            <person name="Kawakami K."/>
            <person name="Shen J.R."/>
        </authorList>
    </citation>
    <scope>X-RAY CRYSTALLOGRAPHY (2.1 ANGSTROMS) IN PHOTOSYSTEM II</scope>
    <scope>FUNCTION</scope>
    <scope>COFACTOR</scope>
    <scope>SUBUNIT</scope>
    <scope>SUBCELLULAR LOCATION</scope>
</reference>
<feature type="chain" id="PRO_0000205338" description="Photosystem II reaction center protein K">
    <location>
        <begin position="1"/>
        <end position="37"/>
    </location>
</feature>
<feature type="topological domain" description="Lumenal" evidence="4">
    <location>
        <begin position="1"/>
        <end position="15"/>
    </location>
</feature>
<feature type="transmembrane region" description="Helical" evidence="4">
    <location>
        <begin position="16"/>
        <end position="30"/>
    </location>
</feature>
<feature type="topological domain" description="Cytoplasmic" evidence="4">
    <location>
        <begin position="31"/>
        <end position="37"/>
    </location>
</feature>
<feature type="non-terminal residue">
    <location>
        <position position="37"/>
    </location>
</feature>
<feature type="helix" evidence="9">
    <location>
        <begin position="4"/>
        <end position="9"/>
    </location>
</feature>
<feature type="helix" evidence="9">
    <location>
        <begin position="10"/>
        <end position="15"/>
    </location>
</feature>
<feature type="helix" evidence="9">
    <location>
        <begin position="16"/>
        <end position="18"/>
    </location>
</feature>
<feature type="helix" evidence="9">
    <location>
        <begin position="19"/>
        <end position="33"/>
    </location>
</feature>
<feature type="turn" evidence="9">
    <location>
        <begin position="34"/>
        <end position="36"/>
    </location>
</feature>
<organism>
    <name type="scientific">Thermostichus vulcanus</name>
    <name type="common">Synechococcus vulcanus</name>
    <dbReference type="NCBI Taxonomy" id="32053"/>
    <lineage>
        <taxon>Bacteria</taxon>
        <taxon>Bacillati</taxon>
        <taxon>Cyanobacteriota</taxon>
        <taxon>Cyanophyceae</taxon>
        <taxon>Thermostichales</taxon>
        <taxon>Thermostichaceae</taxon>
        <taxon>Thermostichus</taxon>
    </lineage>
</organism>
<evidence type="ECO:0000269" key="1">
    <source>
    </source>
</evidence>
<evidence type="ECO:0000269" key="2">
    <source>
    </source>
</evidence>
<evidence type="ECO:0000269" key="3">
    <source>
    </source>
</evidence>
<evidence type="ECO:0000269" key="4">
    <source>
    </source>
</evidence>
<evidence type="ECO:0000269" key="5">
    <source>
    </source>
</evidence>
<evidence type="ECO:0000269" key="6">
    <source>
    </source>
</evidence>
<evidence type="ECO:0000303" key="7">
    <source>
    </source>
</evidence>
<evidence type="ECO:0000305" key="8"/>
<evidence type="ECO:0007829" key="9">
    <source>
        <dbReference type="PDB" id="5B66"/>
    </source>
</evidence>
<name>PSBK_THEVL</name>
<comment type="function">
    <text evidence="3 5">One of the components of the core complex of photosystem II (PSII). PSII is a light-driven water:plastoquinone oxidoreductase that uses light energy to abstract electrons from H(2)O, generating O(2) and a proton gradient subsequently used for ATP formation. It consists of a core antenna complex that captures photons, and an electron transfer chain that converts photonic excitation into a charge separation.</text>
</comment>
<comment type="cofactor">
    <text evidence="2 3 4 5">PSII binds multiple chlorophylls, carotenoids and specific lipids.</text>
</comment>
<comment type="subunit">
    <text evidence="1 2 3 4 5 6">PSII is composed of 1 copy each of membrane proteins PsbA, PsbB, PsbC, PsbD, PsbE, PsbF, PsbH, PsbI, PsbJ, PsbK, PsbL, PsbM, PsbT, PsbX, PsbY, PsbZ, Psb30/Ycf12, peripheral proteins PsbO, CyanoQ (PsbQ), PsbU, PsbV and a large number of cofactors. It forms dimeric complexes.</text>
</comment>
<comment type="subcellular location">
    <subcellularLocation>
        <location evidence="2 3 4 5 6">Cellular thylakoid membrane</location>
        <topology evidence="2 3 4 5">Single-pass membrane protein</topology>
    </subcellularLocation>
</comment>
<comment type="similarity">
    <text evidence="8">Belongs to the PsbK family.</text>
</comment>
<accession>P19054</accession>
<accession>F5H8P3</accession>
<protein>
    <recommendedName>
        <fullName evidence="7">Photosystem II reaction center protein K</fullName>
        <shortName>PSII-K</shortName>
    </recommendedName>
</protein>
<dbReference type="PDB" id="1IZL">
    <property type="method" value="X-ray"/>
    <property type="resolution" value="3.70 A"/>
    <property type="chains" value="K/W=1-37"/>
</dbReference>
<dbReference type="PDB" id="3A0B">
    <property type="method" value="X-ray"/>
    <property type="resolution" value="3.70 A"/>
    <property type="chains" value="K/k=1-36"/>
</dbReference>
<dbReference type="PDB" id="3A0H">
    <property type="method" value="X-ray"/>
    <property type="resolution" value="4.00 A"/>
    <property type="chains" value="K/k=1-36"/>
</dbReference>
<dbReference type="PDB" id="3WU2">
    <property type="method" value="X-ray"/>
    <property type="resolution" value="1.90 A"/>
    <property type="chains" value="K/k=1-37"/>
</dbReference>
<dbReference type="PDB" id="4IL6">
    <property type="method" value="X-ray"/>
    <property type="resolution" value="2.10 A"/>
    <property type="chains" value="K/k=1-37"/>
</dbReference>
<dbReference type="PDB" id="4UB6">
    <property type="method" value="X-ray"/>
    <property type="resolution" value="1.95 A"/>
    <property type="chains" value="K/k=1-37"/>
</dbReference>
<dbReference type="PDB" id="4UB8">
    <property type="method" value="X-ray"/>
    <property type="resolution" value="1.95 A"/>
    <property type="chains" value="K/k=1-37"/>
</dbReference>
<dbReference type="PDB" id="5B5E">
    <property type="method" value="X-ray"/>
    <property type="resolution" value="1.87 A"/>
    <property type="chains" value="K/k=1-37"/>
</dbReference>
<dbReference type="PDB" id="5B66">
    <property type="method" value="X-ray"/>
    <property type="resolution" value="1.85 A"/>
    <property type="chains" value="K/k=1-37"/>
</dbReference>
<dbReference type="PDB" id="5GTH">
    <property type="method" value="X-ray"/>
    <property type="resolution" value="2.50 A"/>
    <property type="chains" value="K/k=1-37"/>
</dbReference>
<dbReference type="PDB" id="5GTI">
    <property type="method" value="X-ray"/>
    <property type="resolution" value="2.50 A"/>
    <property type="chains" value="K/k=1-37"/>
</dbReference>
<dbReference type="PDB" id="5V2C">
    <property type="method" value="X-ray"/>
    <property type="resolution" value="1.90 A"/>
    <property type="chains" value="K/k=1-37"/>
</dbReference>
<dbReference type="PDB" id="5WS5">
    <property type="method" value="X-ray"/>
    <property type="resolution" value="2.35 A"/>
    <property type="chains" value="K/k=1-37"/>
</dbReference>
<dbReference type="PDB" id="5WS6">
    <property type="method" value="X-ray"/>
    <property type="resolution" value="2.35 A"/>
    <property type="chains" value="K/k=1-37"/>
</dbReference>
<dbReference type="PDB" id="6JLJ">
    <property type="method" value="X-ray"/>
    <property type="resolution" value="2.15 A"/>
    <property type="chains" value="K/k=1-37"/>
</dbReference>
<dbReference type="PDB" id="6JLK">
    <property type="method" value="X-ray"/>
    <property type="resolution" value="2.15 A"/>
    <property type="chains" value="K/k=1-37"/>
</dbReference>
<dbReference type="PDB" id="6JLL">
    <property type="method" value="X-ray"/>
    <property type="resolution" value="2.15 A"/>
    <property type="chains" value="K/k=1-37"/>
</dbReference>
<dbReference type="PDB" id="6JLM">
    <property type="method" value="X-ray"/>
    <property type="resolution" value="2.35 A"/>
    <property type="chains" value="K/k=1-37"/>
</dbReference>
<dbReference type="PDB" id="6JLN">
    <property type="method" value="X-ray"/>
    <property type="resolution" value="2.40 A"/>
    <property type="chains" value="K/k=1-37"/>
</dbReference>
<dbReference type="PDB" id="6JLO">
    <property type="method" value="X-ray"/>
    <property type="resolution" value="2.40 A"/>
    <property type="chains" value="K/k=1-37"/>
</dbReference>
<dbReference type="PDB" id="6JLP">
    <property type="method" value="X-ray"/>
    <property type="resolution" value="2.50 A"/>
    <property type="chains" value="K/k=1-37"/>
</dbReference>
<dbReference type="PDB" id="7CJI">
    <property type="method" value="X-ray"/>
    <property type="resolution" value="2.35 A"/>
    <property type="chains" value="K/k=1-37"/>
</dbReference>
<dbReference type="PDB" id="7CJJ">
    <property type="method" value="X-ray"/>
    <property type="resolution" value="2.40 A"/>
    <property type="chains" value="K/k=1-37"/>
</dbReference>
<dbReference type="PDB" id="7COU">
    <property type="method" value="X-ray"/>
    <property type="resolution" value="2.25 A"/>
    <property type="chains" value="K/k=1-37"/>
</dbReference>
<dbReference type="PDB" id="7CZL">
    <property type="method" value="EM"/>
    <property type="resolution" value="3.78 A"/>
    <property type="chains" value="K/k=1-37"/>
</dbReference>
<dbReference type="PDB" id="7D1T">
    <property type="method" value="EM"/>
    <property type="resolution" value="1.95 A"/>
    <property type="chains" value="K/k=1-37"/>
</dbReference>
<dbReference type="PDB" id="7D1U">
    <property type="method" value="EM"/>
    <property type="resolution" value="2.08 A"/>
    <property type="chains" value="K/k=1-37"/>
</dbReference>
<dbReference type="PDB" id="7EDA">
    <property type="method" value="EM"/>
    <property type="resolution" value="2.78 A"/>
    <property type="chains" value="K=1-37"/>
</dbReference>
<dbReference type="PDB" id="8GN0">
    <property type="method" value="X-ray"/>
    <property type="resolution" value="2.15 A"/>
    <property type="chains" value="K/k=1-37"/>
</dbReference>
<dbReference type="PDB" id="8GN1">
    <property type="method" value="X-ray"/>
    <property type="resolution" value="2.10 A"/>
    <property type="chains" value="K/k=1-37"/>
</dbReference>
<dbReference type="PDB" id="8GN2">
    <property type="method" value="X-ray"/>
    <property type="resolution" value="1.95 A"/>
    <property type="chains" value="K/k=1-37"/>
</dbReference>
<dbReference type="PDB" id="8IR5">
    <property type="method" value="X-ray"/>
    <property type="resolution" value="2.15 A"/>
    <property type="chains" value="K/k=1-37"/>
</dbReference>
<dbReference type="PDB" id="8IR6">
    <property type="method" value="X-ray"/>
    <property type="resolution" value="2.20 A"/>
    <property type="chains" value="K/k=1-37"/>
</dbReference>
<dbReference type="PDB" id="8IR7">
    <property type="method" value="X-ray"/>
    <property type="resolution" value="2.25 A"/>
    <property type="chains" value="K/k=1-37"/>
</dbReference>
<dbReference type="PDB" id="8IR8">
    <property type="method" value="X-ray"/>
    <property type="resolution" value="2.25 A"/>
    <property type="chains" value="K/k=1-37"/>
</dbReference>
<dbReference type="PDB" id="8IR9">
    <property type="method" value="X-ray"/>
    <property type="resolution" value="2.20 A"/>
    <property type="chains" value="K/k=1-37"/>
</dbReference>
<dbReference type="PDB" id="8IRA">
    <property type="method" value="X-ray"/>
    <property type="resolution" value="2.20 A"/>
    <property type="chains" value="K/k=1-37"/>
</dbReference>
<dbReference type="PDB" id="8IRB">
    <property type="method" value="X-ray"/>
    <property type="resolution" value="2.30 A"/>
    <property type="chains" value="K/k=1-37"/>
</dbReference>
<dbReference type="PDB" id="8IRC">
    <property type="method" value="X-ray"/>
    <property type="resolution" value="2.25 A"/>
    <property type="chains" value="K/k=1-37"/>
</dbReference>
<dbReference type="PDB" id="8IRD">
    <property type="method" value="X-ray"/>
    <property type="resolution" value="2.30 A"/>
    <property type="chains" value="K/k=1-37"/>
</dbReference>
<dbReference type="PDB" id="8IRE">
    <property type="method" value="X-ray"/>
    <property type="resolution" value="2.25 A"/>
    <property type="chains" value="K/k=1-37"/>
</dbReference>
<dbReference type="PDB" id="8IRF">
    <property type="method" value="X-ray"/>
    <property type="resolution" value="2.25 A"/>
    <property type="chains" value="K/k=1-37"/>
</dbReference>
<dbReference type="PDB" id="8IRG">
    <property type="method" value="X-ray"/>
    <property type="resolution" value="2.30 A"/>
    <property type="chains" value="K/k=1-37"/>
</dbReference>
<dbReference type="PDB" id="8IRH">
    <property type="method" value="X-ray"/>
    <property type="resolution" value="2.25 A"/>
    <property type="chains" value="K/k=1-37"/>
</dbReference>
<dbReference type="PDB" id="8IRI">
    <property type="method" value="X-ray"/>
    <property type="resolution" value="2.25 A"/>
    <property type="chains" value="K/k=1-37"/>
</dbReference>
<dbReference type="PDBsum" id="1IZL"/>
<dbReference type="PDBsum" id="3A0B"/>
<dbReference type="PDBsum" id="3A0H"/>
<dbReference type="PDBsum" id="3WU2"/>
<dbReference type="PDBsum" id="4IL6"/>
<dbReference type="PDBsum" id="4UB6"/>
<dbReference type="PDBsum" id="4UB8"/>
<dbReference type="PDBsum" id="5B5E"/>
<dbReference type="PDBsum" id="5B66"/>
<dbReference type="PDBsum" id="5GTH"/>
<dbReference type="PDBsum" id="5GTI"/>
<dbReference type="PDBsum" id="5V2C"/>
<dbReference type="PDBsum" id="5WS5"/>
<dbReference type="PDBsum" id="5WS6"/>
<dbReference type="PDBsum" id="6JLJ"/>
<dbReference type="PDBsum" id="6JLK"/>
<dbReference type="PDBsum" id="6JLL"/>
<dbReference type="PDBsum" id="6JLM"/>
<dbReference type="PDBsum" id="6JLN"/>
<dbReference type="PDBsum" id="6JLO"/>
<dbReference type="PDBsum" id="6JLP"/>
<dbReference type="PDBsum" id="7CJI"/>
<dbReference type="PDBsum" id="7CJJ"/>
<dbReference type="PDBsum" id="7COU"/>
<dbReference type="PDBsum" id="7CZL"/>
<dbReference type="PDBsum" id="7D1T"/>
<dbReference type="PDBsum" id="7D1U"/>
<dbReference type="PDBsum" id="7EDA"/>
<dbReference type="PDBsum" id="8GN0"/>
<dbReference type="PDBsum" id="8GN1"/>
<dbReference type="PDBsum" id="8GN2"/>
<dbReference type="PDBsum" id="8IR5"/>
<dbReference type="PDBsum" id="8IR6"/>
<dbReference type="PDBsum" id="8IR7"/>
<dbReference type="PDBsum" id="8IR8"/>
<dbReference type="PDBsum" id="8IR9"/>
<dbReference type="PDBsum" id="8IRA"/>
<dbReference type="PDBsum" id="8IRB"/>
<dbReference type="PDBsum" id="8IRC"/>
<dbReference type="PDBsum" id="8IRD"/>
<dbReference type="PDBsum" id="8IRE"/>
<dbReference type="PDBsum" id="8IRF"/>
<dbReference type="PDBsum" id="8IRG"/>
<dbReference type="PDBsum" id="8IRH"/>
<dbReference type="PDBsum" id="8IRI"/>
<dbReference type="EMDB" id="EMD-30511"/>
<dbReference type="EMDB" id="EMD-30547"/>
<dbReference type="EMDB" id="EMD-30548"/>
<dbReference type="EMDB" id="EMD-31062"/>
<dbReference type="SMR" id="P19054"/>
<dbReference type="DIP" id="DIP-48865N"/>
<dbReference type="IntAct" id="P19054">
    <property type="interactions" value="1"/>
</dbReference>
<dbReference type="EvolutionaryTrace" id="P19054"/>
<dbReference type="GO" id="GO:0009539">
    <property type="term" value="C:photosystem II reaction center"/>
    <property type="evidence" value="ECO:0007669"/>
    <property type="project" value="InterPro"/>
</dbReference>
<dbReference type="GO" id="GO:0031676">
    <property type="term" value="C:plasma membrane-derived thylakoid membrane"/>
    <property type="evidence" value="ECO:0007669"/>
    <property type="project" value="UniProtKB-SubCell"/>
</dbReference>
<dbReference type="GO" id="GO:0015979">
    <property type="term" value="P:photosynthesis"/>
    <property type="evidence" value="ECO:0007669"/>
    <property type="project" value="UniProtKB-KW"/>
</dbReference>
<dbReference type="InterPro" id="IPR003687">
    <property type="entry name" value="PSII_PsbK"/>
</dbReference>
<dbReference type="InterPro" id="IPR037270">
    <property type="entry name" value="PSII_PsbK_sf"/>
</dbReference>
<dbReference type="NCBIfam" id="NF002715">
    <property type="entry name" value="PRK02553.1"/>
    <property type="match status" value="1"/>
</dbReference>
<dbReference type="PANTHER" id="PTHR35325">
    <property type="match status" value="1"/>
</dbReference>
<dbReference type="PANTHER" id="PTHR35325:SF1">
    <property type="entry name" value="PHOTOSYSTEM II REACTION CENTER PROTEIN K"/>
    <property type="match status" value="1"/>
</dbReference>
<dbReference type="Pfam" id="PF02533">
    <property type="entry name" value="PsbK"/>
    <property type="match status" value="1"/>
</dbReference>
<dbReference type="SUPFAM" id="SSF161037">
    <property type="entry name" value="Photosystem II reaction center protein K, PsbK"/>
    <property type="match status" value="1"/>
</dbReference>